<proteinExistence type="inferred from homology"/>
<gene>
    <name evidence="1" type="primary">ispG</name>
    <name type="ordered locus">HD_1037</name>
</gene>
<organism>
    <name type="scientific">Haemophilus ducreyi (strain 35000HP / ATCC 700724)</name>
    <dbReference type="NCBI Taxonomy" id="233412"/>
    <lineage>
        <taxon>Bacteria</taxon>
        <taxon>Pseudomonadati</taxon>
        <taxon>Pseudomonadota</taxon>
        <taxon>Gammaproteobacteria</taxon>
        <taxon>Pasteurellales</taxon>
        <taxon>Pasteurellaceae</taxon>
        <taxon>Haemophilus</taxon>
    </lineage>
</organism>
<protein>
    <recommendedName>
        <fullName evidence="1">4-hydroxy-3-methylbut-2-en-1-yl diphosphate synthase (flavodoxin)</fullName>
        <ecNumber evidence="1">1.17.7.3</ecNumber>
    </recommendedName>
    <alternativeName>
        <fullName evidence="1">1-hydroxy-2-methyl-2-(E)-butenyl 4-diphosphate synthase</fullName>
    </alternativeName>
</protein>
<name>ISPG_HAEDU</name>
<reference key="1">
    <citation type="submission" date="2003-06" db="EMBL/GenBank/DDBJ databases">
        <title>The complete genome sequence of Haemophilus ducreyi.</title>
        <authorList>
            <person name="Munson R.S. Jr."/>
            <person name="Ray W.C."/>
            <person name="Mahairas G."/>
            <person name="Sabo P."/>
            <person name="Mungur R."/>
            <person name="Johnson L."/>
            <person name="Nguyen D."/>
            <person name="Wang J."/>
            <person name="Forst C."/>
            <person name="Hood L."/>
        </authorList>
    </citation>
    <scope>NUCLEOTIDE SEQUENCE [LARGE SCALE GENOMIC DNA]</scope>
    <source>
        <strain>35000HP / ATCC 700724</strain>
    </source>
</reference>
<evidence type="ECO:0000255" key="1">
    <source>
        <dbReference type="HAMAP-Rule" id="MF_00159"/>
    </source>
</evidence>
<sequence length="369" mass="40238">MLKEVPIKRRQSTKIYVGNVPVGGDAPIAVQSMTNTRTTDIEATIAQIKALERVGADIVRVSVPTMDAAEAFKVIKQQVNVPLVADIHFDYRIALKVAEYGVDCLRINPGNIGNEERIRAVVDCAKDKNIPIRIGVNAGSLERDLQEKYGEPTPQALLESALRHVEILDRFNFDQFKVSVKASDVFLAVESYRLLAKAIKQPIHLGITEAGGARAGSVKSAIGLGLLLSEGIGDTLRVSLAADPVDEVKVGFDILKSLRIRSRGINFVACPTCSRQEIDVIATVNALEQRLEDILTPMDVSIIGCVVNGPGEALVSDLGVTGSNKMSGFYLDGVRQKERFDNDKLIDQLEAKIRAKVAQQHHRIAIEQI</sequence>
<accession>Q7VME2</accession>
<comment type="function">
    <text evidence="1">Converts 2C-methyl-D-erythritol 2,4-cyclodiphosphate (ME-2,4cPP) into 1-hydroxy-2-methyl-2-(E)-butenyl 4-diphosphate.</text>
</comment>
<comment type="catalytic activity">
    <reaction evidence="1">
        <text>(2E)-4-hydroxy-3-methylbut-2-enyl diphosphate + oxidized [flavodoxin] + H2O + 2 H(+) = 2-C-methyl-D-erythritol 2,4-cyclic diphosphate + reduced [flavodoxin]</text>
        <dbReference type="Rhea" id="RHEA:43604"/>
        <dbReference type="Rhea" id="RHEA-COMP:10622"/>
        <dbReference type="Rhea" id="RHEA-COMP:10623"/>
        <dbReference type="ChEBI" id="CHEBI:15377"/>
        <dbReference type="ChEBI" id="CHEBI:15378"/>
        <dbReference type="ChEBI" id="CHEBI:57618"/>
        <dbReference type="ChEBI" id="CHEBI:58210"/>
        <dbReference type="ChEBI" id="CHEBI:58483"/>
        <dbReference type="ChEBI" id="CHEBI:128753"/>
        <dbReference type="EC" id="1.17.7.3"/>
    </reaction>
</comment>
<comment type="cofactor">
    <cofactor evidence="1">
        <name>[4Fe-4S] cluster</name>
        <dbReference type="ChEBI" id="CHEBI:49883"/>
    </cofactor>
    <text evidence="1">Binds 1 [4Fe-4S] cluster.</text>
</comment>
<comment type="pathway">
    <text evidence="1">Isoprenoid biosynthesis; isopentenyl diphosphate biosynthesis via DXP pathway; isopentenyl diphosphate from 1-deoxy-D-xylulose 5-phosphate: step 5/6.</text>
</comment>
<comment type="similarity">
    <text evidence="1">Belongs to the IspG family.</text>
</comment>
<keyword id="KW-0004">4Fe-4S</keyword>
<keyword id="KW-0408">Iron</keyword>
<keyword id="KW-0411">Iron-sulfur</keyword>
<keyword id="KW-0414">Isoprene biosynthesis</keyword>
<keyword id="KW-0479">Metal-binding</keyword>
<keyword id="KW-0560">Oxidoreductase</keyword>
<keyword id="KW-1185">Reference proteome</keyword>
<dbReference type="EC" id="1.17.7.3" evidence="1"/>
<dbReference type="EMBL" id="AE017143">
    <property type="protein sequence ID" value="AAP95914.1"/>
    <property type="molecule type" value="Genomic_DNA"/>
</dbReference>
<dbReference type="RefSeq" id="WP_010944964.1">
    <property type="nucleotide sequence ID" value="NC_002940.2"/>
</dbReference>
<dbReference type="SMR" id="Q7VME2"/>
<dbReference type="STRING" id="233412.HD_1037"/>
<dbReference type="GeneID" id="60732924"/>
<dbReference type="KEGG" id="hdu:HD_1037"/>
<dbReference type="eggNOG" id="COG0821">
    <property type="taxonomic scope" value="Bacteria"/>
</dbReference>
<dbReference type="HOGENOM" id="CLU_042258_0_0_6"/>
<dbReference type="OrthoDB" id="9803214at2"/>
<dbReference type="UniPathway" id="UPA00056">
    <property type="reaction ID" value="UER00096"/>
</dbReference>
<dbReference type="Proteomes" id="UP000001022">
    <property type="component" value="Chromosome"/>
</dbReference>
<dbReference type="GO" id="GO:0051539">
    <property type="term" value="F:4 iron, 4 sulfur cluster binding"/>
    <property type="evidence" value="ECO:0007669"/>
    <property type="project" value="UniProtKB-UniRule"/>
</dbReference>
<dbReference type="GO" id="GO:0046429">
    <property type="term" value="F:4-hydroxy-3-methylbut-2-en-1-yl diphosphate synthase activity (ferredoxin)"/>
    <property type="evidence" value="ECO:0007669"/>
    <property type="project" value="UniProtKB-UniRule"/>
</dbReference>
<dbReference type="GO" id="GO:0141197">
    <property type="term" value="F:4-hydroxy-3-methylbut-2-enyl-diphosphate synthase activity (flavodoxin)"/>
    <property type="evidence" value="ECO:0007669"/>
    <property type="project" value="UniProtKB-EC"/>
</dbReference>
<dbReference type="GO" id="GO:0005506">
    <property type="term" value="F:iron ion binding"/>
    <property type="evidence" value="ECO:0007669"/>
    <property type="project" value="InterPro"/>
</dbReference>
<dbReference type="GO" id="GO:0019288">
    <property type="term" value="P:isopentenyl diphosphate biosynthetic process, methylerythritol 4-phosphate pathway"/>
    <property type="evidence" value="ECO:0007669"/>
    <property type="project" value="UniProtKB-UniRule"/>
</dbReference>
<dbReference type="GO" id="GO:0016114">
    <property type="term" value="P:terpenoid biosynthetic process"/>
    <property type="evidence" value="ECO:0007669"/>
    <property type="project" value="InterPro"/>
</dbReference>
<dbReference type="FunFam" id="3.20.20.20:FF:000001">
    <property type="entry name" value="4-hydroxy-3-methylbut-2-en-1-yl diphosphate synthase (flavodoxin)"/>
    <property type="match status" value="1"/>
</dbReference>
<dbReference type="FunFam" id="3.30.413.10:FF:000002">
    <property type="entry name" value="4-hydroxy-3-methylbut-2-en-1-yl diphosphate synthase (flavodoxin)"/>
    <property type="match status" value="1"/>
</dbReference>
<dbReference type="Gene3D" id="3.20.20.20">
    <property type="entry name" value="Dihydropteroate synthase-like"/>
    <property type="match status" value="1"/>
</dbReference>
<dbReference type="Gene3D" id="3.30.413.10">
    <property type="entry name" value="Sulfite Reductase Hemoprotein, domain 1"/>
    <property type="match status" value="1"/>
</dbReference>
<dbReference type="HAMAP" id="MF_00159">
    <property type="entry name" value="IspG"/>
    <property type="match status" value="1"/>
</dbReference>
<dbReference type="InterPro" id="IPR011005">
    <property type="entry name" value="Dihydropteroate_synth-like_sf"/>
</dbReference>
<dbReference type="InterPro" id="IPR016425">
    <property type="entry name" value="IspG_bac"/>
</dbReference>
<dbReference type="InterPro" id="IPR004588">
    <property type="entry name" value="IspG_bac-typ"/>
</dbReference>
<dbReference type="InterPro" id="IPR045854">
    <property type="entry name" value="NO2/SO3_Rdtase_4Fe4S_sf"/>
</dbReference>
<dbReference type="NCBIfam" id="TIGR00612">
    <property type="entry name" value="ispG_gcpE"/>
    <property type="match status" value="1"/>
</dbReference>
<dbReference type="NCBIfam" id="NF001540">
    <property type="entry name" value="PRK00366.1"/>
    <property type="match status" value="1"/>
</dbReference>
<dbReference type="PANTHER" id="PTHR30454">
    <property type="entry name" value="4-HYDROXY-3-METHYLBUT-2-EN-1-YL DIPHOSPHATE SYNTHASE"/>
    <property type="match status" value="1"/>
</dbReference>
<dbReference type="PANTHER" id="PTHR30454:SF0">
    <property type="entry name" value="4-HYDROXY-3-METHYLBUT-2-EN-1-YL DIPHOSPHATE SYNTHASE (FERREDOXIN), CHLOROPLASTIC"/>
    <property type="match status" value="1"/>
</dbReference>
<dbReference type="Pfam" id="PF04551">
    <property type="entry name" value="GcpE"/>
    <property type="match status" value="1"/>
</dbReference>
<dbReference type="PIRSF" id="PIRSF004640">
    <property type="entry name" value="IspG"/>
    <property type="match status" value="1"/>
</dbReference>
<dbReference type="SUPFAM" id="SSF51717">
    <property type="entry name" value="Dihydropteroate synthetase-like"/>
    <property type="match status" value="1"/>
</dbReference>
<dbReference type="SUPFAM" id="SSF56014">
    <property type="entry name" value="Nitrite and sulphite reductase 4Fe-4S domain-like"/>
    <property type="match status" value="1"/>
</dbReference>
<feature type="chain" id="PRO_0000190584" description="4-hydroxy-3-methylbut-2-en-1-yl diphosphate synthase (flavodoxin)">
    <location>
        <begin position="1"/>
        <end position="369"/>
    </location>
</feature>
<feature type="binding site" evidence="1">
    <location>
        <position position="270"/>
    </location>
    <ligand>
        <name>[4Fe-4S] cluster</name>
        <dbReference type="ChEBI" id="CHEBI:49883"/>
    </ligand>
</feature>
<feature type="binding site" evidence="1">
    <location>
        <position position="273"/>
    </location>
    <ligand>
        <name>[4Fe-4S] cluster</name>
        <dbReference type="ChEBI" id="CHEBI:49883"/>
    </ligand>
</feature>
<feature type="binding site" evidence="1">
    <location>
        <position position="305"/>
    </location>
    <ligand>
        <name>[4Fe-4S] cluster</name>
        <dbReference type="ChEBI" id="CHEBI:49883"/>
    </ligand>
</feature>
<feature type="binding site" evidence="1">
    <location>
        <position position="312"/>
    </location>
    <ligand>
        <name>[4Fe-4S] cluster</name>
        <dbReference type="ChEBI" id="CHEBI:49883"/>
    </ligand>
</feature>